<sequence>MTLSFTTHWRDELPDFYTSLSPTPLDNARLIWRNAPLAQQLGVPDALFAPESGAGVWGGEALLPGMSPLAQVYSGHQFGAWAGQLGDGRGILLGEQQLADGRRYDWHLKGAGLTPYSRMGDGRAVLRSTIRESLASEAMHALGIPTTRALAMVTSDTPVYRERVEPGAMLMRVAESHVRFGHFEHFYYRREPQKVQQLADYVIRHHWPQLQDEADKYLLWFRDIVMRTAQTIASWQTVGFAHGVMNTDNMSILGLTIDYGPYGFLDDFQPDFICNHSDYQGRYSFENQPAVGLWNLQRLAQSLSPFISAEALNAALDEYQHALLTAYGQRMRDKLGLFSQQKGDNDLLDGLFALMIREKSDYTRTFRLLSHSEQLSAASPLRDEFIDRAAFDSWFAGYRARLRDEQVDDAQRQQRMQGVNPALVLRNWLAQRAIEQAEAGDMGELERLHAALADPFTDREDDYVRRPPDWGKRLEVSCSS</sequence>
<gene>
    <name evidence="1" type="primary">ydiU</name>
    <name evidence="1" type="synonym">selO</name>
    <name type="ordered locus">KPN78578_21310</name>
    <name type="ORF">KPN_02164</name>
</gene>
<accession>A6TAH1</accession>
<protein>
    <recommendedName>
        <fullName evidence="1">Protein nucleotidyltransferase YdiU</fullName>
        <ecNumber evidence="1">2.7.7.-</ecNumber>
    </recommendedName>
    <alternativeName>
        <fullName evidence="1">Protein adenylyltransferase YdiU</fullName>
        <ecNumber evidence="1">2.7.7.108</ecNumber>
    </alternativeName>
    <alternativeName>
        <fullName evidence="1">Protein uridylyltransferase YdiU</fullName>
        <ecNumber evidence="1">2.7.7.-</ecNumber>
    </alternativeName>
</protein>
<keyword id="KW-0067">ATP-binding</keyword>
<keyword id="KW-0460">Magnesium</keyword>
<keyword id="KW-0464">Manganese</keyword>
<keyword id="KW-0479">Metal-binding</keyword>
<keyword id="KW-0547">Nucleotide-binding</keyword>
<keyword id="KW-0548">Nucleotidyltransferase</keyword>
<keyword id="KW-0808">Transferase</keyword>
<evidence type="ECO:0000255" key="1">
    <source>
        <dbReference type="HAMAP-Rule" id="MF_00692"/>
    </source>
</evidence>
<feature type="chain" id="PRO_1000062030" description="Protein nucleotidyltransferase YdiU">
    <location>
        <begin position="1"/>
        <end position="480"/>
    </location>
</feature>
<feature type="active site" description="Proton acceptor" evidence="1">
    <location>
        <position position="248"/>
    </location>
</feature>
<feature type="binding site" evidence="1">
    <location>
        <position position="86"/>
    </location>
    <ligand>
        <name>ATP</name>
        <dbReference type="ChEBI" id="CHEBI:30616"/>
    </ligand>
</feature>
<feature type="binding site" evidence="1">
    <location>
        <position position="88"/>
    </location>
    <ligand>
        <name>ATP</name>
        <dbReference type="ChEBI" id="CHEBI:30616"/>
    </ligand>
</feature>
<feature type="binding site" evidence="1">
    <location>
        <position position="89"/>
    </location>
    <ligand>
        <name>ATP</name>
        <dbReference type="ChEBI" id="CHEBI:30616"/>
    </ligand>
</feature>
<feature type="binding site" evidence="1">
    <location>
        <position position="109"/>
    </location>
    <ligand>
        <name>ATP</name>
        <dbReference type="ChEBI" id="CHEBI:30616"/>
    </ligand>
</feature>
<feature type="binding site" evidence="1">
    <location>
        <position position="121"/>
    </location>
    <ligand>
        <name>ATP</name>
        <dbReference type="ChEBI" id="CHEBI:30616"/>
    </ligand>
</feature>
<feature type="binding site" evidence="1">
    <location>
        <position position="122"/>
    </location>
    <ligand>
        <name>ATP</name>
        <dbReference type="ChEBI" id="CHEBI:30616"/>
    </ligand>
</feature>
<feature type="binding site" evidence="1">
    <location>
        <position position="172"/>
    </location>
    <ligand>
        <name>ATP</name>
        <dbReference type="ChEBI" id="CHEBI:30616"/>
    </ligand>
</feature>
<feature type="binding site" evidence="1">
    <location>
        <position position="179"/>
    </location>
    <ligand>
        <name>ATP</name>
        <dbReference type="ChEBI" id="CHEBI:30616"/>
    </ligand>
</feature>
<feature type="binding site" evidence="1">
    <location>
        <position position="249"/>
    </location>
    <ligand>
        <name>Mg(2+)</name>
        <dbReference type="ChEBI" id="CHEBI:18420"/>
    </ligand>
</feature>
<feature type="binding site" evidence="1">
    <location>
        <position position="258"/>
    </location>
    <ligand>
        <name>ATP</name>
        <dbReference type="ChEBI" id="CHEBI:30616"/>
    </ligand>
</feature>
<feature type="binding site" evidence="1">
    <location>
        <position position="258"/>
    </location>
    <ligand>
        <name>Mg(2+)</name>
        <dbReference type="ChEBI" id="CHEBI:18420"/>
    </ligand>
</feature>
<comment type="function">
    <text evidence="1">Nucleotidyltransferase involved in the post-translational modification of proteins. It can catalyze the addition of adenosine monophosphate (AMP) or uridine monophosphate (UMP) to a protein, resulting in modifications known as AMPylation and UMPylation.</text>
</comment>
<comment type="catalytic activity">
    <reaction evidence="1">
        <text>L-seryl-[protein] + ATP = 3-O-(5'-adenylyl)-L-seryl-[protein] + diphosphate</text>
        <dbReference type="Rhea" id="RHEA:58120"/>
        <dbReference type="Rhea" id="RHEA-COMP:9863"/>
        <dbReference type="Rhea" id="RHEA-COMP:15073"/>
        <dbReference type="ChEBI" id="CHEBI:29999"/>
        <dbReference type="ChEBI" id="CHEBI:30616"/>
        <dbReference type="ChEBI" id="CHEBI:33019"/>
        <dbReference type="ChEBI" id="CHEBI:142516"/>
        <dbReference type="EC" id="2.7.7.108"/>
    </reaction>
</comment>
<comment type="catalytic activity">
    <reaction evidence="1">
        <text>L-threonyl-[protein] + ATP = 3-O-(5'-adenylyl)-L-threonyl-[protein] + diphosphate</text>
        <dbReference type="Rhea" id="RHEA:54292"/>
        <dbReference type="Rhea" id="RHEA-COMP:11060"/>
        <dbReference type="Rhea" id="RHEA-COMP:13847"/>
        <dbReference type="ChEBI" id="CHEBI:30013"/>
        <dbReference type="ChEBI" id="CHEBI:30616"/>
        <dbReference type="ChEBI" id="CHEBI:33019"/>
        <dbReference type="ChEBI" id="CHEBI:138113"/>
        <dbReference type="EC" id="2.7.7.108"/>
    </reaction>
</comment>
<comment type="catalytic activity">
    <reaction evidence="1">
        <text>L-tyrosyl-[protein] + ATP = O-(5'-adenylyl)-L-tyrosyl-[protein] + diphosphate</text>
        <dbReference type="Rhea" id="RHEA:54288"/>
        <dbReference type="Rhea" id="RHEA-COMP:10136"/>
        <dbReference type="Rhea" id="RHEA-COMP:13846"/>
        <dbReference type="ChEBI" id="CHEBI:30616"/>
        <dbReference type="ChEBI" id="CHEBI:33019"/>
        <dbReference type="ChEBI" id="CHEBI:46858"/>
        <dbReference type="ChEBI" id="CHEBI:83624"/>
        <dbReference type="EC" id="2.7.7.108"/>
    </reaction>
</comment>
<comment type="catalytic activity">
    <reaction evidence="1">
        <text>L-histidyl-[protein] + UTP = N(tele)-(5'-uridylyl)-L-histidyl-[protein] + diphosphate</text>
        <dbReference type="Rhea" id="RHEA:83891"/>
        <dbReference type="Rhea" id="RHEA-COMP:9745"/>
        <dbReference type="Rhea" id="RHEA-COMP:20239"/>
        <dbReference type="ChEBI" id="CHEBI:29979"/>
        <dbReference type="ChEBI" id="CHEBI:33019"/>
        <dbReference type="ChEBI" id="CHEBI:46398"/>
        <dbReference type="ChEBI" id="CHEBI:233474"/>
    </reaction>
</comment>
<comment type="catalytic activity">
    <reaction evidence="1">
        <text>L-seryl-[protein] + UTP = O-(5'-uridylyl)-L-seryl-[protein] + diphosphate</text>
        <dbReference type="Rhea" id="RHEA:64604"/>
        <dbReference type="Rhea" id="RHEA-COMP:9863"/>
        <dbReference type="Rhea" id="RHEA-COMP:16635"/>
        <dbReference type="ChEBI" id="CHEBI:29999"/>
        <dbReference type="ChEBI" id="CHEBI:33019"/>
        <dbReference type="ChEBI" id="CHEBI:46398"/>
        <dbReference type="ChEBI" id="CHEBI:156051"/>
    </reaction>
</comment>
<comment type="catalytic activity">
    <reaction evidence="1">
        <text>L-tyrosyl-[protein] + UTP = O-(5'-uridylyl)-L-tyrosyl-[protein] + diphosphate</text>
        <dbReference type="Rhea" id="RHEA:83887"/>
        <dbReference type="Rhea" id="RHEA-COMP:10136"/>
        <dbReference type="Rhea" id="RHEA-COMP:20238"/>
        <dbReference type="ChEBI" id="CHEBI:33019"/>
        <dbReference type="ChEBI" id="CHEBI:46398"/>
        <dbReference type="ChEBI" id="CHEBI:46858"/>
        <dbReference type="ChEBI" id="CHEBI:90602"/>
    </reaction>
</comment>
<comment type="cofactor">
    <cofactor evidence="1">
        <name>Mg(2+)</name>
        <dbReference type="ChEBI" id="CHEBI:18420"/>
    </cofactor>
    <cofactor evidence="1">
        <name>Mn(2+)</name>
        <dbReference type="ChEBI" id="CHEBI:29035"/>
    </cofactor>
</comment>
<comment type="similarity">
    <text evidence="1">Belongs to the SELO family.</text>
</comment>
<dbReference type="EC" id="2.7.7.-" evidence="1"/>
<dbReference type="EC" id="2.7.7.108" evidence="1"/>
<dbReference type="EMBL" id="CP000647">
    <property type="protein sequence ID" value="ABR77592.1"/>
    <property type="molecule type" value="Genomic_DNA"/>
</dbReference>
<dbReference type="RefSeq" id="WP_004184566.1">
    <property type="nucleotide sequence ID" value="NC_009648.1"/>
</dbReference>
<dbReference type="SMR" id="A6TAH1"/>
<dbReference type="STRING" id="272620.KPN_02164"/>
<dbReference type="PaxDb" id="272620-KPN_02164"/>
<dbReference type="EnsemblBacteria" id="ABR77592">
    <property type="protein sequence ID" value="ABR77592"/>
    <property type="gene ID" value="KPN_02164"/>
</dbReference>
<dbReference type="KEGG" id="kpn:KPN_02164"/>
<dbReference type="HOGENOM" id="CLU_010245_4_0_6"/>
<dbReference type="Proteomes" id="UP000000265">
    <property type="component" value="Chromosome"/>
</dbReference>
<dbReference type="GO" id="GO:0070733">
    <property type="term" value="F:AMPylase activity"/>
    <property type="evidence" value="ECO:0007669"/>
    <property type="project" value="RHEA"/>
</dbReference>
<dbReference type="GO" id="GO:0005524">
    <property type="term" value="F:ATP binding"/>
    <property type="evidence" value="ECO:0007669"/>
    <property type="project" value="UniProtKB-UniRule"/>
</dbReference>
<dbReference type="GO" id="GO:0000287">
    <property type="term" value="F:magnesium ion binding"/>
    <property type="evidence" value="ECO:0007669"/>
    <property type="project" value="UniProtKB-UniRule"/>
</dbReference>
<dbReference type="HAMAP" id="MF_00692">
    <property type="entry name" value="YdiU_SelO"/>
    <property type="match status" value="1"/>
</dbReference>
<dbReference type="InterPro" id="IPR054838">
    <property type="entry name" value="adnlytase_SelO"/>
</dbReference>
<dbReference type="InterPro" id="IPR003846">
    <property type="entry name" value="SelO"/>
</dbReference>
<dbReference type="NCBIfam" id="NF040880">
    <property type="entry name" value="adnlytase_SelO"/>
    <property type="match status" value="1"/>
</dbReference>
<dbReference type="NCBIfam" id="NF000658">
    <property type="entry name" value="PRK00029.1"/>
    <property type="match status" value="1"/>
</dbReference>
<dbReference type="PANTHER" id="PTHR32057">
    <property type="entry name" value="PROTEIN ADENYLYLTRANSFERASE SELO, MITOCHONDRIAL"/>
    <property type="match status" value="1"/>
</dbReference>
<dbReference type="PANTHER" id="PTHR32057:SF14">
    <property type="entry name" value="PROTEIN ADENYLYLTRANSFERASE SELO, MITOCHONDRIAL"/>
    <property type="match status" value="1"/>
</dbReference>
<dbReference type="Pfam" id="PF02696">
    <property type="entry name" value="SelO"/>
    <property type="match status" value="1"/>
</dbReference>
<proteinExistence type="inferred from homology"/>
<reference key="1">
    <citation type="submission" date="2006-09" db="EMBL/GenBank/DDBJ databases">
        <authorList>
            <consortium name="The Klebsiella pneumonia Genome Sequencing Project"/>
            <person name="McClelland M."/>
            <person name="Sanderson E.K."/>
            <person name="Spieth J."/>
            <person name="Clifton W.S."/>
            <person name="Latreille P."/>
            <person name="Sabo A."/>
            <person name="Pepin K."/>
            <person name="Bhonagiri V."/>
            <person name="Porwollik S."/>
            <person name="Ali J."/>
            <person name="Wilson R.K."/>
        </authorList>
    </citation>
    <scope>NUCLEOTIDE SEQUENCE [LARGE SCALE GENOMIC DNA]</scope>
    <source>
        <strain>ATCC 700721 / MGH 78578</strain>
    </source>
</reference>
<name>SELO_KLEP7</name>
<organism>
    <name type="scientific">Klebsiella pneumoniae subsp. pneumoniae (strain ATCC 700721 / MGH 78578)</name>
    <dbReference type="NCBI Taxonomy" id="272620"/>
    <lineage>
        <taxon>Bacteria</taxon>
        <taxon>Pseudomonadati</taxon>
        <taxon>Pseudomonadota</taxon>
        <taxon>Gammaproteobacteria</taxon>
        <taxon>Enterobacterales</taxon>
        <taxon>Enterobacteriaceae</taxon>
        <taxon>Klebsiella/Raoultella group</taxon>
        <taxon>Klebsiella</taxon>
        <taxon>Klebsiella pneumoniae complex</taxon>
    </lineage>
</organism>